<sequence>MSDEEHTFENADAGASATYPMQCSALRKNGFVVIKGRPCKIVDMSTSKTGKHGHAKVHLVTLDIFTGKKLEDLSPSTHNLEVPFVKRSEYQLLDIDDGYLSLMTMDGETKDDVKAPEGELGDSMQAAFDEGKDLMVTIISAMGEEAAISFKEAPRSD</sequence>
<keyword id="KW-0007">Acetylation</keyword>
<keyword id="KW-0963">Cytoplasm</keyword>
<keyword id="KW-0251">Elongation factor</keyword>
<keyword id="KW-0385">Hypusine</keyword>
<keyword id="KW-1017">Isopeptide bond</keyword>
<keyword id="KW-0597">Phosphoprotein</keyword>
<keyword id="KW-0648">Protein biosynthesis</keyword>
<keyword id="KW-1185">Reference proteome</keyword>
<keyword id="KW-0694">RNA-binding</keyword>
<keyword id="KW-0832">Ubl conjugation</keyword>
<reference key="1">
    <citation type="journal article" date="1990" name="J. Biol. Chem.">
        <title>The ANB1 locus of Saccharomyces cerevisiae encodes the protein synthesis initiation factor eIF-4D.</title>
        <authorList>
            <person name="Mehta K.D."/>
            <person name="Leung D."/>
            <person name="Lefebvre L."/>
            <person name="Smith M."/>
        </authorList>
    </citation>
    <scope>NUCLEOTIDE SEQUENCE [GENOMIC DNA]</scope>
</reference>
<reference key="2">
    <citation type="journal article" date="1991" name="Mol. Cell. Biol.">
        <title>Translation initiation factor 5A and its hypusine modification are essential for cell viability in the yeast Saccharomyces cerevisiae.</title>
        <authorList>
            <person name="Schnier J."/>
            <person name="Schwelberger H.G."/>
            <person name="Smit-Mcbride Z."/>
            <person name="Kang H.A."/>
            <person name="Hershey J.W.B."/>
        </authorList>
    </citation>
    <scope>NUCLEOTIDE SEQUENCE [GENOMIC DNA]</scope>
    <scope>HYPUSINE AT LYS-51</scope>
</reference>
<reference key="3">
    <citation type="submission" date="1990-12" db="EMBL/GenBank/DDBJ databases">
        <authorList>
            <person name="Sandholzer U.R."/>
        </authorList>
    </citation>
    <scope>NUCLEOTIDE SEQUENCE [GENOMIC DNA]</scope>
    <source>
        <strain>DBY874</strain>
    </source>
</reference>
<reference key="4">
    <citation type="journal article" date="1995" name="Yeast">
        <title>Analysis of a 42.5 kb DNA sequence of chromosome X reveals three tRNA genes and 14 new open reading frames including a gene most probably belonging to the family of ubiquitin-protein ligases.</title>
        <authorList>
            <person name="Huang M.-E."/>
            <person name="Chuat J.-C."/>
            <person name="Galibert F."/>
        </authorList>
    </citation>
    <scope>NUCLEOTIDE SEQUENCE [GENOMIC DNA]</scope>
    <source>
        <strain>ATCC 204508 / S288c</strain>
    </source>
</reference>
<reference key="5">
    <citation type="journal article" date="1996" name="EMBO J.">
        <title>Complete nucleotide sequence of Saccharomyces cerevisiae chromosome X.</title>
        <authorList>
            <person name="Galibert F."/>
            <person name="Alexandraki D."/>
            <person name="Baur A."/>
            <person name="Boles E."/>
            <person name="Chalwatzis N."/>
            <person name="Chuat J.-C."/>
            <person name="Coster F."/>
            <person name="Cziepluch C."/>
            <person name="de Haan M."/>
            <person name="Domdey H."/>
            <person name="Durand P."/>
            <person name="Entian K.-D."/>
            <person name="Gatius M."/>
            <person name="Goffeau A."/>
            <person name="Grivell L.A."/>
            <person name="Hennemann A."/>
            <person name="Herbert C.J."/>
            <person name="Heumann K."/>
            <person name="Hilger F."/>
            <person name="Hollenberg C.P."/>
            <person name="Huang M.-E."/>
            <person name="Jacq C."/>
            <person name="Jauniaux J.-C."/>
            <person name="Katsoulou C."/>
            <person name="Kirchrath L."/>
            <person name="Kleine K."/>
            <person name="Kordes E."/>
            <person name="Koetter P."/>
            <person name="Liebl S."/>
            <person name="Louis E.J."/>
            <person name="Manus V."/>
            <person name="Mewes H.-W."/>
            <person name="Miosga T."/>
            <person name="Obermaier B."/>
            <person name="Perea J."/>
            <person name="Pohl T.M."/>
            <person name="Portetelle D."/>
            <person name="Pujol A."/>
            <person name="Purnelle B."/>
            <person name="Ramezani Rad M."/>
            <person name="Rasmussen S.W."/>
            <person name="Rose M."/>
            <person name="Rossau R."/>
            <person name="Schaaff-Gerstenschlaeger I."/>
            <person name="Smits P.H.M."/>
            <person name="Scarcez T."/>
            <person name="Soriano N."/>
            <person name="To Van D."/>
            <person name="Tzermia M."/>
            <person name="Van Broekhoven A."/>
            <person name="Vandenbol M."/>
            <person name="Wedler H."/>
            <person name="von Wettstein D."/>
            <person name="Wambutt R."/>
            <person name="Zagulski M."/>
            <person name="Zollner A."/>
            <person name="Karpfinger-Hartl L."/>
        </authorList>
    </citation>
    <scope>NUCLEOTIDE SEQUENCE [LARGE SCALE GENOMIC DNA]</scope>
    <source>
        <strain>ATCC 204508 / S288c</strain>
    </source>
</reference>
<reference key="6">
    <citation type="journal article" date="2014" name="G3 (Bethesda)">
        <title>The reference genome sequence of Saccharomyces cerevisiae: Then and now.</title>
        <authorList>
            <person name="Engel S.R."/>
            <person name="Dietrich F.S."/>
            <person name="Fisk D.G."/>
            <person name="Binkley G."/>
            <person name="Balakrishnan R."/>
            <person name="Costanzo M.C."/>
            <person name="Dwight S.S."/>
            <person name="Hitz B.C."/>
            <person name="Karra K."/>
            <person name="Nash R.S."/>
            <person name="Weng S."/>
            <person name="Wong E.D."/>
            <person name="Lloyd P."/>
            <person name="Skrzypek M.S."/>
            <person name="Miyasato S.R."/>
            <person name="Simison M."/>
            <person name="Cherry J.M."/>
        </authorList>
    </citation>
    <scope>GENOME REANNOTATION</scope>
    <source>
        <strain>ATCC 204508 / S288c</strain>
    </source>
</reference>
<reference key="7">
    <citation type="journal article" date="2007" name="Genome Res.">
        <title>Approaching a complete repository of sequence-verified protein-encoding clones for Saccharomyces cerevisiae.</title>
        <authorList>
            <person name="Hu Y."/>
            <person name="Rolfs A."/>
            <person name="Bhullar B."/>
            <person name="Murthy T.V.S."/>
            <person name="Zhu C."/>
            <person name="Berger M.F."/>
            <person name="Camargo A.A."/>
            <person name="Kelley F."/>
            <person name="McCarron S."/>
            <person name="Jepson D."/>
            <person name="Richardson A."/>
            <person name="Raphael J."/>
            <person name="Moreira D."/>
            <person name="Taycher E."/>
            <person name="Zuo D."/>
            <person name="Mohr S."/>
            <person name="Kane M.F."/>
            <person name="Williamson J."/>
            <person name="Simpson A.J.G."/>
            <person name="Bulyk M.L."/>
            <person name="Harlow E."/>
            <person name="Marsischky G."/>
            <person name="Kolodner R.D."/>
            <person name="LaBaer J."/>
        </authorList>
    </citation>
    <scope>NUCLEOTIDE SEQUENCE [GENOMIC DNA]</scope>
    <source>
        <strain>ATCC 204508 / S288c</strain>
    </source>
</reference>
<reference key="8">
    <citation type="journal article" date="1989" name="J. Biol. Chem.">
        <title>Identification of an upstream repressor site controlling the expression of an anaerobic gene (ANB1) in Saccharomyces cerevisiae.</title>
        <authorList>
            <person name="Mehta K.D."/>
            <person name="Smith M."/>
        </authorList>
    </citation>
    <scope>NUCLEOTIDE SEQUENCE [GENOMIC DNA] OF 1-8</scope>
    <scope>INDUCTION</scope>
</reference>
<reference key="9">
    <citation type="journal article" date="1990" name="Mol. Cell. Biol.">
        <title>A hypoxic consensus operator and a constitutive activation region regulate the ANB1 gene of Saccharomyces cerevisiae.</title>
        <authorList>
            <person name="Lowry C.V."/>
            <person name="Esperanza Cerdan M."/>
            <person name="Zitomer R.S."/>
        </authorList>
    </citation>
    <scope>NUCLEOTIDE SEQUENCE [GENOMIC DNA] OF 1-8</scope>
</reference>
<reference key="10">
    <citation type="journal article" date="1978" name="J. Biol. Chem.">
        <title>The mechanism of action of protein synthesis initiation factors from rabbit reticulocytes.</title>
        <authorList>
            <person name="Benne R."/>
            <person name="Hershey J.W.B."/>
        </authorList>
    </citation>
    <scope>FUNCTION</scope>
</reference>
<reference key="11">
    <citation type="journal article" date="1986" name="Mol. Cell. Biol.">
        <title>Negative regulation of the Saccharomyces cerevisiae ANB1 gene by heme, as mediated by the ROX1 gene product.</title>
        <authorList>
            <person name="Lowry C.V."/>
            <person name="Lieber R.H."/>
        </authorList>
    </citation>
    <scope>INDUCTION</scope>
</reference>
<reference key="12">
    <citation type="journal article" date="1987" name="J. Biol. Chem.">
        <title>Hypusine formation in eukaryotic initiation factor 4D is not reversed when rates or specificity of protein synthesis is altered.</title>
        <authorList>
            <person name="Gordon E.D."/>
            <person name="Mora R."/>
            <person name="Meredith S.C."/>
            <person name="Lindquist S.L."/>
        </authorList>
    </citation>
    <scope>HYPUSINE FORMATION</scope>
</reference>
<reference key="13">
    <citation type="journal article" date="1988" name="Genetics">
        <title>Identification of REO1, a gene involved in negative regulation of COX5b and ANB1 in aerobically grown Saccharomyces cerevisiae.</title>
        <authorList>
            <person name="Trueblood C.E."/>
            <person name="Poyton R.O."/>
        </authorList>
    </citation>
    <scope>INDUCTION</scope>
</reference>
<reference key="14">
    <citation type="journal article" date="1988" name="Mol. Cell. Biol.">
        <title>ROX1 encodes a heme-induced repression factor regulating ANB1 and CYC7 of Saccharomyces cerevisiae.</title>
        <authorList>
            <person name="Lowry C.V."/>
            <person name="Zitomer R.S."/>
        </authorList>
    </citation>
    <scope>INDUCTION</scope>
</reference>
<reference key="15">
    <citation type="journal article" date="1993" name="J. Biol. Chem.">
        <title>Translation initiation factor eIF-5A expressed from either of two yeast genes or from human cDNA. Functional identity under aerobic and anaerobic conditions.</title>
        <authorList>
            <person name="Schwelberger H.G."/>
            <person name="Kang H.A."/>
            <person name="Hershey J.W.B."/>
        </authorList>
    </citation>
    <scope>INDUCTION</scope>
</reference>
<reference key="16">
    <citation type="journal article" date="1994" name="J. Biol. Chem.">
        <title>Effect of initiation factor eIF-5A depletion on protein synthesis and proliferation of Saccharomyces cerevisiae.</title>
        <authorList>
            <person name="Kang H.A."/>
            <person name="Hershey J.W.B."/>
        </authorList>
    </citation>
    <scope>FUNCTION</scope>
</reference>
<reference key="17">
    <citation type="journal article" date="2003" name="Nature">
        <title>Global analysis of protein expression in yeast.</title>
        <authorList>
            <person name="Ghaemmaghami S."/>
            <person name="Huh W.-K."/>
            <person name="Bower K."/>
            <person name="Howson R.W."/>
            <person name="Belle A."/>
            <person name="Dephoure N."/>
            <person name="O'Shea E.K."/>
            <person name="Weissman J.S."/>
        </authorList>
    </citation>
    <scope>LEVEL OF PROTEIN EXPRESSION [LARGE SCALE ANALYSIS]</scope>
</reference>
<reference key="18">
    <citation type="journal article" date="2009" name="Biochem. Biophys. Res. Commun.">
        <title>eIF5A has a function in the elongation step of translation in yeast.</title>
        <authorList>
            <person name="Gregio A.P.B."/>
            <person name="Cano V.P.S."/>
            <person name="Avaca J.S."/>
            <person name="Valentini S.R."/>
            <person name="Zanelli C.F."/>
        </authorList>
    </citation>
    <scope>FUNCTION</scope>
</reference>
<reference key="19">
    <citation type="journal article" date="2009" name="Nature">
        <title>Hypusine-containing protein eIF5A promotes translation elongation.</title>
        <authorList>
            <person name="Saini P."/>
            <person name="Eyler D.E."/>
            <person name="Green R."/>
            <person name="Dever T.E."/>
        </authorList>
    </citation>
    <scope>FUNCTION</scope>
</reference>
<reference key="20">
    <citation type="journal article" date="2009" name="Science">
        <title>Global analysis of Cdk1 substrate phosphorylation sites provides insights into evolution.</title>
        <authorList>
            <person name="Holt L.J."/>
            <person name="Tuch B.B."/>
            <person name="Villen J."/>
            <person name="Johnson A.D."/>
            <person name="Gygi S.P."/>
            <person name="Morgan D.O."/>
        </authorList>
    </citation>
    <scope>PHOSPHORYLATION [LARGE SCALE ANALYSIS] AT SER-2 AND THR-7</scope>
    <scope>IDENTIFICATION BY MASS SPECTROMETRY [LARGE SCALE ANALYSIS]</scope>
</reference>
<evidence type="ECO:0000250" key="1">
    <source>
        <dbReference type="UniProtKB" id="P23301"/>
    </source>
</evidence>
<evidence type="ECO:0000269" key="2">
    <source>
    </source>
</evidence>
<evidence type="ECO:0000269" key="3">
    <source>
    </source>
</evidence>
<evidence type="ECO:0000269" key="4">
    <source>
    </source>
</evidence>
<evidence type="ECO:0000269" key="5">
    <source>
    </source>
</evidence>
<evidence type="ECO:0000269" key="6">
    <source>
    </source>
</evidence>
<evidence type="ECO:0000269" key="7">
    <source>
    </source>
</evidence>
<evidence type="ECO:0000269" key="8">
    <source>
    </source>
</evidence>
<evidence type="ECO:0000269" key="9">
    <source>
    </source>
</evidence>
<evidence type="ECO:0000269" key="10">
    <source>
    </source>
</evidence>
<evidence type="ECO:0000269" key="11">
    <source>
    </source>
</evidence>
<evidence type="ECO:0000269" key="12">
    <source>
    </source>
</evidence>
<evidence type="ECO:0000269" key="13">
    <source>
    </source>
</evidence>
<evidence type="ECO:0000305" key="14"/>
<evidence type="ECO:0000305" key="15">
    <source>
    </source>
</evidence>
<evidence type="ECO:0007744" key="16">
    <source>
    </source>
</evidence>
<gene>
    <name type="primary">ANB1</name>
    <name type="synonym">HYP1</name>
    <name type="synonym">TIF51B</name>
    <name type="ordered locus">YJR047C</name>
    <name type="ORF">J1651</name>
</gene>
<proteinExistence type="evidence at protein level"/>
<name>IF5A2_YEAST</name>
<feature type="initiator methionine" description="Removed" evidence="1">
    <location>
        <position position="1"/>
    </location>
</feature>
<feature type="chain" id="PRO_0000142487" description="Eukaryotic translation initiation factor 5A-2">
    <location>
        <begin position="2"/>
        <end position="157"/>
    </location>
</feature>
<feature type="modified residue" description="N-acetylserine" evidence="1">
    <location>
        <position position="2"/>
    </location>
</feature>
<feature type="modified residue" description="Phosphoserine" evidence="16">
    <location>
        <position position="2"/>
    </location>
</feature>
<feature type="modified residue" description="Phosphothreonine" evidence="16">
    <location>
        <position position="7"/>
    </location>
</feature>
<feature type="modified residue" description="Hypusine" evidence="3">
    <location>
        <position position="51"/>
    </location>
</feature>
<feature type="modified residue" description="Phosphoserine" evidence="1">
    <location>
        <position position="74"/>
    </location>
</feature>
<feature type="cross-link" description="Glycyl lysine isopeptide (Lys-Gly) (interchain with G-Cter in ubiquitin)" evidence="1">
    <location>
        <position position="86"/>
    </location>
</feature>
<comment type="function">
    <text evidence="1 4 5 11 12">Translation factor that promotes translation elongation and termination, particularly upon ribosome stalling at specific amino acid sequence contexts (PubMed:19338753, PubMed:19424157, PubMed:641056, PubMed:8307948). Binds between the exit (E) and peptidyl (P) site of the ribosome and promotes rescue of stalled ribosome: specifically required for efficient translation of polyproline-containing peptides as well as other motifs that stall the ribosome (By similarity). Acts as ribosome quality control (RQC) cofactor by joining the RQC complex to facilitate peptidyl transfer during CAT tailing step (By similarity). Involved in actin dynamics and cell cycle progression, mRNA decay and probably in a pathway involved in stress response and maintenance of cell wall integrity (By similarity).</text>
</comment>
<comment type="subunit">
    <text evidence="1">Homodimer (By similarity). Binds to 80S ribosomes (By similarity). Actively translating ribosomes show mutually exclusive binding of eIF5a (HYP2 or ANB1) and EFT1/eEF2 (By similarity). Interacts with DYS1 and LIA1 (By similarity).</text>
</comment>
<comment type="subcellular location">
    <subcellularLocation>
        <location evidence="1">Cytoplasm</location>
    </subcellularLocation>
    <text evidence="1">Concentrates in the perinuclear region.</text>
</comment>
<comment type="induction">
    <text evidence="6 7 8 10 13">Expressed in anaerobic conditions. Down-regulated by heme and the ROX1 and REO1 transcription factors in aerobic conditions.</text>
</comment>
<comment type="PTM">
    <text evidence="3 9">Lys-51 undergoes hypusination, a unique post-translational modification that consists in the addition of a butylamino group from spermidine to lysine side chain, leading to the formation of the unusual amino acid hypusine. eIF-5As are the only known proteins to undergo this modification, which is essential for their function.</text>
</comment>
<comment type="miscellaneous">
    <text>There are two genes for eIF-5A in yeast.</text>
</comment>
<comment type="miscellaneous">
    <text evidence="2">Present with 14200 molecules/cell in log phase SD medium.</text>
</comment>
<comment type="similarity">
    <text evidence="14">Belongs to the eIF-5A family.</text>
</comment>
<comment type="caution">
    <text evidence="15">Was originally thought to be a translation initiation factor but further analysis (PubMed:19424157, PubMed:19338753) clearly suggests that it is involved in translation elongation and not translation initiation.</text>
</comment>
<dbReference type="EMBL" id="J05455">
    <property type="protein sequence ID" value="AAA34425.1"/>
    <property type="molecule type" value="Genomic_DNA"/>
</dbReference>
<dbReference type="EMBL" id="M63542">
    <property type="protein sequence ID" value="AAA35156.1"/>
    <property type="molecule type" value="Genomic_DNA"/>
</dbReference>
<dbReference type="EMBL" id="M60477">
    <property type="protein sequence ID" value="AAA34424.1"/>
    <property type="molecule type" value="Genomic_DNA"/>
</dbReference>
<dbReference type="EMBL" id="L36344">
    <property type="protein sequence ID" value="AAA88750.1"/>
    <property type="molecule type" value="Genomic_DNA"/>
</dbReference>
<dbReference type="EMBL" id="Z49547">
    <property type="protein sequence ID" value="CAA89575.1"/>
    <property type="molecule type" value="Genomic_DNA"/>
</dbReference>
<dbReference type="EMBL" id="AY557894">
    <property type="protein sequence ID" value="AAS56220.1"/>
    <property type="molecule type" value="Genomic_DNA"/>
</dbReference>
<dbReference type="EMBL" id="X56235">
    <property type="protein sequence ID" value="CAA39692.1"/>
    <property type="molecule type" value="Genomic_DNA"/>
</dbReference>
<dbReference type="EMBL" id="BK006943">
    <property type="protein sequence ID" value="DAA08834.1"/>
    <property type="molecule type" value="Genomic_DNA"/>
</dbReference>
<dbReference type="PIR" id="B40259">
    <property type="entry name" value="FIBYA2"/>
</dbReference>
<dbReference type="RefSeq" id="NP_012581.3">
    <property type="nucleotide sequence ID" value="NM_001181705.3"/>
</dbReference>
<dbReference type="SMR" id="P19211"/>
<dbReference type="BioGRID" id="33800">
    <property type="interactions" value="91"/>
</dbReference>
<dbReference type="FunCoup" id="P19211">
    <property type="interactions" value="1038"/>
</dbReference>
<dbReference type="IntAct" id="P19211">
    <property type="interactions" value="34"/>
</dbReference>
<dbReference type="MINT" id="P19211"/>
<dbReference type="STRING" id="4932.YJR047C"/>
<dbReference type="iPTMnet" id="P19211"/>
<dbReference type="PaxDb" id="4932-YJR047C"/>
<dbReference type="PeptideAtlas" id="P19211"/>
<dbReference type="EnsemblFungi" id="YJR047C_mRNA">
    <property type="protein sequence ID" value="YJR047C"/>
    <property type="gene ID" value="YJR047C"/>
</dbReference>
<dbReference type="GeneID" id="853506"/>
<dbReference type="KEGG" id="sce:YJR047C"/>
<dbReference type="AGR" id="SGD:S000003808"/>
<dbReference type="SGD" id="S000003808">
    <property type="gene designation" value="ANB1"/>
</dbReference>
<dbReference type="VEuPathDB" id="FungiDB:YJR047C"/>
<dbReference type="eggNOG" id="KOG3271">
    <property type="taxonomic scope" value="Eukaryota"/>
</dbReference>
<dbReference type="GeneTree" id="ENSGT00390000003738"/>
<dbReference type="HOGENOM" id="CLU_102600_0_0_1"/>
<dbReference type="InParanoid" id="P19211"/>
<dbReference type="OMA" id="QIMDMET"/>
<dbReference type="OrthoDB" id="9975114at2759"/>
<dbReference type="BioCyc" id="YEAST:G3O-31682-MONOMER"/>
<dbReference type="Reactome" id="R-SCE-204626">
    <property type="pathway name" value="Hypusine synthesis from eIF5A-lysine"/>
</dbReference>
<dbReference type="BioGRID-ORCS" id="853506">
    <property type="hits" value="10 hits in 10 CRISPR screens"/>
</dbReference>
<dbReference type="PRO" id="PR:P19211"/>
<dbReference type="Proteomes" id="UP000002311">
    <property type="component" value="Chromosome X"/>
</dbReference>
<dbReference type="RNAct" id="P19211">
    <property type="molecule type" value="protein"/>
</dbReference>
<dbReference type="GO" id="GO:0022626">
    <property type="term" value="C:cytosolic ribosome"/>
    <property type="evidence" value="ECO:0000314"/>
    <property type="project" value="SGD"/>
</dbReference>
<dbReference type="GO" id="GO:0043022">
    <property type="term" value="F:ribosome binding"/>
    <property type="evidence" value="ECO:0000247"/>
    <property type="project" value="SGD"/>
</dbReference>
<dbReference type="GO" id="GO:0003723">
    <property type="term" value="F:RNA binding"/>
    <property type="evidence" value="ECO:0000247"/>
    <property type="project" value="SGD"/>
</dbReference>
<dbReference type="GO" id="GO:0003746">
    <property type="term" value="F:translation elongation factor activity"/>
    <property type="evidence" value="ECO:0000247"/>
    <property type="project" value="SGD"/>
</dbReference>
<dbReference type="GO" id="GO:0045901">
    <property type="term" value="P:positive regulation of translational elongation"/>
    <property type="evidence" value="ECO:0000316"/>
    <property type="project" value="SGD"/>
</dbReference>
<dbReference type="GO" id="GO:0045905">
    <property type="term" value="P:positive regulation of translational termination"/>
    <property type="evidence" value="ECO:0000247"/>
    <property type="project" value="SGD"/>
</dbReference>
<dbReference type="GO" id="GO:0006414">
    <property type="term" value="P:translational elongation"/>
    <property type="evidence" value="ECO:0000318"/>
    <property type="project" value="GO_Central"/>
</dbReference>
<dbReference type="GO" id="GO:0006452">
    <property type="term" value="P:translational frameshifting"/>
    <property type="evidence" value="ECO:0000316"/>
    <property type="project" value="SGD"/>
</dbReference>
<dbReference type="CDD" id="cd04468">
    <property type="entry name" value="S1_eIF5A"/>
    <property type="match status" value="1"/>
</dbReference>
<dbReference type="FunFam" id="2.30.30.30:FF:000007">
    <property type="entry name" value="Eukaryotic translation initiation factor 5A"/>
    <property type="match status" value="1"/>
</dbReference>
<dbReference type="FunFam" id="2.40.50.140:FF:000034">
    <property type="entry name" value="Eukaryotic translation initiation factor 5A"/>
    <property type="match status" value="1"/>
</dbReference>
<dbReference type="Gene3D" id="2.30.30.30">
    <property type="match status" value="1"/>
</dbReference>
<dbReference type="Gene3D" id="2.40.50.140">
    <property type="entry name" value="Nucleic acid-binding proteins"/>
    <property type="match status" value="1"/>
</dbReference>
<dbReference type="InterPro" id="IPR001884">
    <property type="entry name" value="IF5A-like"/>
</dbReference>
<dbReference type="InterPro" id="IPR048670">
    <property type="entry name" value="IF5A-like_N"/>
</dbReference>
<dbReference type="InterPro" id="IPR012340">
    <property type="entry name" value="NA-bd_OB-fold"/>
</dbReference>
<dbReference type="InterPro" id="IPR014722">
    <property type="entry name" value="Rib_uL2_dom2"/>
</dbReference>
<dbReference type="InterPro" id="IPR019769">
    <property type="entry name" value="Trans_elong_IF5A_hypusine_site"/>
</dbReference>
<dbReference type="InterPro" id="IPR020189">
    <property type="entry name" value="Transl_elong_IF5A_C"/>
</dbReference>
<dbReference type="InterPro" id="IPR008991">
    <property type="entry name" value="Translation_prot_SH3-like_sf"/>
</dbReference>
<dbReference type="NCBIfam" id="TIGR00037">
    <property type="entry name" value="eIF_5A"/>
    <property type="match status" value="1"/>
</dbReference>
<dbReference type="PANTHER" id="PTHR11673">
    <property type="entry name" value="TRANSLATION INITIATION FACTOR 5A FAMILY MEMBER"/>
    <property type="match status" value="1"/>
</dbReference>
<dbReference type="Pfam" id="PF01287">
    <property type="entry name" value="eIF-5a"/>
    <property type="match status" value="1"/>
</dbReference>
<dbReference type="Pfam" id="PF21485">
    <property type="entry name" value="IF5A-like_N"/>
    <property type="match status" value="1"/>
</dbReference>
<dbReference type="PIRSF" id="PIRSF003025">
    <property type="entry name" value="eIF5A"/>
    <property type="match status" value="1"/>
</dbReference>
<dbReference type="SMART" id="SM01376">
    <property type="entry name" value="eIF-5a"/>
    <property type="match status" value="1"/>
</dbReference>
<dbReference type="SUPFAM" id="SSF50249">
    <property type="entry name" value="Nucleic acid-binding proteins"/>
    <property type="match status" value="1"/>
</dbReference>
<dbReference type="SUPFAM" id="SSF50104">
    <property type="entry name" value="Translation proteins SH3-like domain"/>
    <property type="match status" value="1"/>
</dbReference>
<dbReference type="PROSITE" id="PS00302">
    <property type="entry name" value="IF5A_HYPUSINE"/>
    <property type="match status" value="1"/>
</dbReference>
<organism>
    <name type="scientific">Saccharomyces cerevisiae (strain ATCC 204508 / S288c)</name>
    <name type="common">Baker's yeast</name>
    <dbReference type="NCBI Taxonomy" id="559292"/>
    <lineage>
        <taxon>Eukaryota</taxon>
        <taxon>Fungi</taxon>
        <taxon>Dikarya</taxon>
        <taxon>Ascomycota</taxon>
        <taxon>Saccharomycotina</taxon>
        <taxon>Saccharomycetes</taxon>
        <taxon>Saccharomycetales</taxon>
        <taxon>Saccharomycetaceae</taxon>
        <taxon>Saccharomyces</taxon>
    </lineage>
</organism>
<accession>P19211</accession>
<accession>D6VWL8</accession>
<protein>
    <recommendedName>
        <fullName>Eukaryotic translation initiation factor 5A-2</fullName>
        <shortName>eIF-5A-2</shortName>
    </recommendedName>
    <alternativeName>
        <fullName>Anaerobically induced protein 1</fullName>
    </alternativeName>
    <alternativeName>
        <fullName>Hypusine-containing protein HP1</fullName>
    </alternativeName>
    <alternativeName>
        <fullName>eIF-4D</fullName>
    </alternativeName>
</protein>